<reference key="1">
    <citation type="journal article" date="1993" name="J. Gen. Virol.">
        <title>Nucleotide sequence of the ubiquitin-39K gene region from the Orgyia pseudotsugata multinucleocapsid nuclear polyhedrosis virus genome.</title>
        <authorList>
            <person name="Russell R.L.Q."/>
            <person name="Rohrmann G.F."/>
        </authorList>
    </citation>
    <scope>NUCLEOTIDE SEQUENCE [GENOMIC DNA]</scope>
</reference>
<sequence length="119" mass="13415">MGVRVAQPAAKQFVVLQQVEVLYGVVSQVALLHDAELLVVFDQLWQQFALAAHLFKHVAQVAAGHLALLELFCQLTNVVLVAAPRARLDQLRQLVLQAPVLLAAKRCEREHWLDQRRHL</sequence>
<accession>Q05122</accession>
<name>Y13K_NPVOP</name>
<organismHost>
    <name type="scientific">Orgyia pseudotsugata</name>
    <name type="common">Douglas-fir tussock moth</name>
    <dbReference type="NCBI Taxonomy" id="33414"/>
</organismHost>
<organism>
    <name type="scientific">Orgyia pseudotsugata multicapsid polyhedrosis virus</name>
    <name type="common">OpMNPV</name>
    <dbReference type="NCBI Taxonomy" id="262177"/>
    <lineage>
        <taxon>Viruses</taxon>
        <taxon>Viruses incertae sedis</taxon>
        <taxon>Naldaviricetes</taxon>
        <taxon>Lefavirales</taxon>
        <taxon>Baculoviridae</taxon>
        <taxon>Alphabaculovirus</taxon>
        <taxon>Alphabaculovirus orpseudotsugatae</taxon>
    </lineage>
</organism>
<protein>
    <recommendedName>
        <fullName>Uncharacterized 13.4 kDa protein in ubiquitin 3'region</fullName>
    </recommendedName>
    <alternativeName>
        <fullName>Lambda 208</fullName>
    </alternativeName>
</protein>
<dbReference type="EMBL" id="D13375">
    <property type="protein sequence ID" value="BAA02641.1"/>
    <property type="molecule type" value="Genomic_DNA"/>
</dbReference>
<dbReference type="PIR" id="JQ2032">
    <property type="entry name" value="JQ2032"/>
</dbReference>
<dbReference type="SMR" id="Q05122"/>
<proteinExistence type="predicted"/>
<feature type="chain" id="PRO_0000133077" description="Uncharacterized 13.4 kDa protein in ubiquitin 3'region">
    <location>
        <begin position="1"/>
        <end position="119"/>
    </location>
</feature>